<feature type="chain" id="PRO_0000122664" description="Protein RecA">
    <location>
        <begin position="1"/>
        <end position="365"/>
    </location>
</feature>
<feature type="binding site" evidence="1">
    <location>
        <begin position="81"/>
        <end position="88"/>
    </location>
    <ligand>
        <name>ATP</name>
        <dbReference type="ChEBI" id="CHEBI:30616"/>
    </ligand>
</feature>
<organism>
    <name type="scientific">Borreliella burgdorferi (strain ATCC 35210 / DSM 4680 / CIP 102532 / B31)</name>
    <name type="common">Borrelia burgdorferi</name>
    <dbReference type="NCBI Taxonomy" id="224326"/>
    <lineage>
        <taxon>Bacteria</taxon>
        <taxon>Pseudomonadati</taxon>
        <taxon>Spirochaetota</taxon>
        <taxon>Spirochaetia</taxon>
        <taxon>Spirochaetales</taxon>
        <taxon>Borreliaceae</taxon>
        <taxon>Borreliella</taxon>
    </lineage>
</organism>
<keyword id="KW-0067">ATP-binding</keyword>
<keyword id="KW-0963">Cytoplasm</keyword>
<keyword id="KW-0227">DNA damage</keyword>
<keyword id="KW-0233">DNA recombination</keyword>
<keyword id="KW-0234">DNA repair</keyword>
<keyword id="KW-0238">DNA-binding</keyword>
<keyword id="KW-0547">Nucleotide-binding</keyword>
<keyword id="KW-1185">Reference proteome</keyword>
<keyword id="KW-0742">SOS response</keyword>
<evidence type="ECO:0000255" key="1">
    <source>
        <dbReference type="HAMAP-Rule" id="MF_00268"/>
    </source>
</evidence>
<gene>
    <name evidence="1" type="primary">recA</name>
    <name type="ordered locus">BB_0131</name>
</gene>
<reference key="1">
    <citation type="journal article" date="1995" name="Gene">
        <title>The recA gene of Borrelia burgdorferi.</title>
        <authorList>
            <person name="Dew-Jager K."/>
            <person name="Yu W.Q."/>
            <person name="Huang W.M."/>
        </authorList>
    </citation>
    <scope>NUCLEOTIDE SEQUENCE [GENOMIC DNA]</scope>
    <source>
        <strain>Sh-2-82</strain>
    </source>
</reference>
<reference key="2">
    <citation type="journal article" date="1997" name="Nature">
        <title>Genomic sequence of a Lyme disease spirochaete, Borrelia burgdorferi.</title>
        <authorList>
            <person name="Fraser C.M."/>
            <person name="Casjens S."/>
            <person name="Huang W.M."/>
            <person name="Sutton G.G."/>
            <person name="Clayton R.A."/>
            <person name="Lathigra R."/>
            <person name="White O."/>
            <person name="Ketchum K.A."/>
            <person name="Dodson R.J."/>
            <person name="Hickey E.K."/>
            <person name="Gwinn M.L."/>
            <person name="Dougherty B.A."/>
            <person name="Tomb J.-F."/>
            <person name="Fleischmann R.D."/>
            <person name="Richardson D.L."/>
            <person name="Peterson J.D."/>
            <person name="Kerlavage A.R."/>
            <person name="Quackenbush J."/>
            <person name="Salzberg S.L."/>
            <person name="Hanson M."/>
            <person name="van Vugt R."/>
            <person name="Palmer N."/>
            <person name="Adams M.D."/>
            <person name="Gocayne J.D."/>
            <person name="Weidman J.F."/>
            <person name="Utterback T.R."/>
            <person name="Watthey L."/>
            <person name="McDonald L.A."/>
            <person name="Artiach P."/>
            <person name="Bowman C."/>
            <person name="Garland S.A."/>
            <person name="Fujii C."/>
            <person name="Cotton M.D."/>
            <person name="Horst K."/>
            <person name="Roberts K.M."/>
            <person name="Hatch B."/>
            <person name="Smith H.O."/>
            <person name="Venter J.C."/>
        </authorList>
    </citation>
    <scope>NUCLEOTIDE SEQUENCE [LARGE SCALE GENOMIC DNA]</scope>
    <source>
        <strain>ATCC 35210 / DSM 4680 / CIP 102532 / B31</strain>
    </source>
</reference>
<accession>Q59180</accession>
<name>RECA_BORBU</name>
<sequence length="365" mass="39949">MSKLKEKREKAVVGIERASKEEAIELARVQIEKAFGKGSLIKMGESPVGQGIKSMSSGSIVLDEALGIGGYPRGRIIEIFGPESSGKTTLTLQAIAEVQKEGGIAAFIDAEHALDPVYAKALGVNVAELWLSQPDTGEQALEIAEHLIRSGGVDLIVVDSVAALTPKLEIDGEMGDSQIGLQARLMSKALRKITGILSKSNTCIMFINQIRMRIGVMFGNPETTTGGNALKFYSSLRLEVRKIEQVTRSGSSDDVIGNKIRVKIVKNKVAPPFRKVELIIYFGKGISREAGILDAAIKHNLIQKTGSWYSLGDNKLGQGRESVIEYLSKEVELANNLDKRLRKIIFNNFDQENDNFIEFKEDESE</sequence>
<proteinExistence type="inferred from homology"/>
<dbReference type="EMBL" id="U23457">
    <property type="protein sequence ID" value="AAA97557.1"/>
    <property type="molecule type" value="Genomic_DNA"/>
</dbReference>
<dbReference type="EMBL" id="AE000783">
    <property type="protein sequence ID" value="AAC66507.1"/>
    <property type="molecule type" value="Genomic_DNA"/>
</dbReference>
<dbReference type="PIR" id="C70116">
    <property type="entry name" value="C70116"/>
</dbReference>
<dbReference type="RefSeq" id="NP_212265.1">
    <property type="nucleotide sequence ID" value="NC_001318.1"/>
</dbReference>
<dbReference type="RefSeq" id="WP_002658212.1">
    <property type="nucleotide sequence ID" value="NC_001318.1"/>
</dbReference>
<dbReference type="SMR" id="Q59180"/>
<dbReference type="STRING" id="224326.BB_0131"/>
<dbReference type="PaxDb" id="224326-BB_0131"/>
<dbReference type="EnsemblBacteria" id="AAC66507">
    <property type="protein sequence ID" value="AAC66507"/>
    <property type="gene ID" value="BB_0131"/>
</dbReference>
<dbReference type="GeneID" id="56568087"/>
<dbReference type="KEGG" id="bbu:BB_0131"/>
<dbReference type="PATRIC" id="fig|224326.49.peg.529"/>
<dbReference type="HOGENOM" id="CLU_040469_3_2_12"/>
<dbReference type="OrthoDB" id="9776733at2"/>
<dbReference type="Proteomes" id="UP000001807">
    <property type="component" value="Chromosome"/>
</dbReference>
<dbReference type="GO" id="GO:0005829">
    <property type="term" value="C:cytosol"/>
    <property type="evidence" value="ECO:0007669"/>
    <property type="project" value="TreeGrafter"/>
</dbReference>
<dbReference type="GO" id="GO:0005524">
    <property type="term" value="F:ATP binding"/>
    <property type="evidence" value="ECO:0007669"/>
    <property type="project" value="UniProtKB-UniRule"/>
</dbReference>
<dbReference type="GO" id="GO:0016887">
    <property type="term" value="F:ATP hydrolysis activity"/>
    <property type="evidence" value="ECO:0007669"/>
    <property type="project" value="InterPro"/>
</dbReference>
<dbReference type="GO" id="GO:0008094">
    <property type="term" value="F:ATP-dependent activity, acting on DNA"/>
    <property type="evidence" value="ECO:0000315"/>
    <property type="project" value="CACAO"/>
</dbReference>
<dbReference type="GO" id="GO:0140664">
    <property type="term" value="F:ATP-dependent DNA damage sensor activity"/>
    <property type="evidence" value="ECO:0007669"/>
    <property type="project" value="InterPro"/>
</dbReference>
<dbReference type="GO" id="GO:0003684">
    <property type="term" value="F:damaged DNA binding"/>
    <property type="evidence" value="ECO:0007669"/>
    <property type="project" value="UniProtKB-UniRule"/>
</dbReference>
<dbReference type="GO" id="GO:0003697">
    <property type="term" value="F:single-stranded DNA binding"/>
    <property type="evidence" value="ECO:0007669"/>
    <property type="project" value="UniProtKB-UniRule"/>
</dbReference>
<dbReference type="GO" id="GO:0006310">
    <property type="term" value="P:DNA recombination"/>
    <property type="evidence" value="ECO:0007669"/>
    <property type="project" value="UniProtKB-UniRule"/>
</dbReference>
<dbReference type="GO" id="GO:0006281">
    <property type="term" value="P:DNA repair"/>
    <property type="evidence" value="ECO:0007669"/>
    <property type="project" value="UniProtKB-UniRule"/>
</dbReference>
<dbReference type="GO" id="GO:0009432">
    <property type="term" value="P:SOS response"/>
    <property type="evidence" value="ECO:0007669"/>
    <property type="project" value="UniProtKB-UniRule"/>
</dbReference>
<dbReference type="CDD" id="cd00983">
    <property type="entry name" value="RecA"/>
    <property type="match status" value="1"/>
</dbReference>
<dbReference type="FunFam" id="3.40.50.300:FF:000087">
    <property type="entry name" value="Recombinase RecA"/>
    <property type="match status" value="1"/>
</dbReference>
<dbReference type="Gene3D" id="3.40.50.300">
    <property type="entry name" value="P-loop containing nucleotide triphosphate hydrolases"/>
    <property type="match status" value="1"/>
</dbReference>
<dbReference type="HAMAP" id="MF_00268">
    <property type="entry name" value="RecA"/>
    <property type="match status" value="1"/>
</dbReference>
<dbReference type="InterPro" id="IPR003593">
    <property type="entry name" value="AAA+_ATPase"/>
</dbReference>
<dbReference type="InterPro" id="IPR013765">
    <property type="entry name" value="DNA_recomb/repair_RecA"/>
</dbReference>
<dbReference type="InterPro" id="IPR020584">
    <property type="entry name" value="DNA_recomb/repair_RecA_CS"/>
</dbReference>
<dbReference type="InterPro" id="IPR027417">
    <property type="entry name" value="P-loop_NTPase"/>
</dbReference>
<dbReference type="InterPro" id="IPR049261">
    <property type="entry name" value="RecA-like_C"/>
</dbReference>
<dbReference type="InterPro" id="IPR049428">
    <property type="entry name" value="RecA-like_N"/>
</dbReference>
<dbReference type="InterPro" id="IPR020588">
    <property type="entry name" value="RecA_ATP-bd"/>
</dbReference>
<dbReference type="InterPro" id="IPR023400">
    <property type="entry name" value="RecA_C_sf"/>
</dbReference>
<dbReference type="InterPro" id="IPR020587">
    <property type="entry name" value="RecA_monomer-monomer_interface"/>
</dbReference>
<dbReference type="NCBIfam" id="TIGR02012">
    <property type="entry name" value="tigrfam_recA"/>
    <property type="match status" value="1"/>
</dbReference>
<dbReference type="PANTHER" id="PTHR45900:SF1">
    <property type="entry name" value="MITOCHONDRIAL DNA REPAIR PROTEIN RECA HOMOLOG-RELATED"/>
    <property type="match status" value="1"/>
</dbReference>
<dbReference type="PANTHER" id="PTHR45900">
    <property type="entry name" value="RECA"/>
    <property type="match status" value="1"/>
</dbReference>
<dbReference type="Pfam" id="PF00154">
    <property type="entry name" value="RecA"/>
    <property type="match status" value="1"/>
</dbReference>
<dbReference type="Pfam" id="PF21096">
    <property type="entry name" value="RecA_C"/>
    <property type="match status" value="1"/>
</dbReference>
<dbReference type="PRINTS" id="PR00142">
    <property type="entry name" value="RECA"/>
</dbReference>
<dbReference type="SMART" id="SM00382">
    <property type="entry name" value="AAA"/>
    <property type="match status" value="1"/>
</dbReference>
<dbReference type="SUPFAM" id="SSF52540">
    <property type="entry name" value="P-loop containing nucleoside triphosphate hydrolases"/>
    <property type="match status" value="1"/>
</dbReference>
<dbReference type="SUPFAM" id="SSF54752">
    <property type="entry name" value="RecA protein, C-terminal domain"/>
    <property type="match status" value="1"/>
</dbReference>
<dbReference type="PROSITE" id="PS00321">
    <property type="entry name" value="RECA_1"/>
    <property type="match status" value="1"/>
</dbReference>
<dbReference type="PROSITE" id="PS50162">
    <property type="entry name" value="RECA_2"/>
    <property type="match status" value="1"/>
</dbReference>
<dbReference type="PROSITE" id="PS50163">
    <property type="entry name" value="RECA_3"/>
    <property type="match status" value="1"/>
</dbReference>
<comment type="function">
    <text>Can catalyze the hydrolysis of ATP in the presence of single-stranded DNA, the ATP-dependent uptake of single-stranded DNA by duplex DNA, and the ATP-dependent hybridization of homologous single-stranded DNAs. It interacts with LexA causing its activation and leading to its autocatalytic cleavage.</text>
</comment>
<comment type="subcellular location">
    <subcellularLocation>
        <location evidence="1">Cytoplasm</location>
    </subcellularLocation>
</comment>
<comment type="similarity">
    <text evidence="1">Belongs to the RecA family.</text>
</comment>
<protein>
    <recommendedName>
        <fullName evidence="1">Protein RecA</fullName>
    </recommendedName>
    <alternativeName>
        <fullName evidence="1">Recombinase A</fullName>
    </alternativeName>
</protein>